<accession>Q9ZE40</accession>
<organism>
    <name type="scientific">Rickettsia prowazekii (strain Madrid E)</name>
    <dbReference type="NCBI Taxonomy" id="272947"/>
    <lineage>
        <taxon>Bacteria</taxon>
        <taxon>Pseudomonadati</taxon>
        <taxon>Pseudomonadota</taxon>
        <taxon>Alphaproteobacteria</taxon>
        <taxon>Rickettsiales</taxon>
        <taxon>Rickettsiaceae</taxon>
        <taxon>Rickettsieae</taxon>
        <taxon>Rickettsia</taxon>
        <taxon>typhus group</taxon>
    </lineage>
</organism>
<gene>
    <name type="ordered locus">RP108</name>
</gene>
<reference key="1">
    <citation type="journal article" date="1998" name="Nature">
        <title>The genome sequence of Rickettsia prowazekii and the origin of mitochondria.</title>
        <authorList>
            <person name="Andersson S.G.E."/>
            <person name="Zomorodipour A."/>
            <person name="Andersson J.O."/>
            <person name="Sicheritz-Ponten T."/>
            <person name="Alsmark U.C.M."/>
            <person name="Podowski R.M."/>
            <person name="Naeslund A.K."/>
            <person name="Eriksson A.-S."/>
            <person name="Winkler H.H."/>
            <person name="Kurland C.G."/>
        </authorList>
    </citation>
    <scope>NUCLEOTIDE SEQUENCE [LARGE SCALE GENOMIC DNA]</scope>
    <source>
        <strain>Madrid E</strain>
    </source>
</reference>
<protein>
    <recommendedName>
        <fullName>Uncharacterized lipoprotein RP108</fullName>
    </recommendedName>
</protein>
<dbReference type="EMBL" id="AJ235270">
    <property type="protein sequence ID" value="CAA14577.1"/>
    <property type="molecule type" value="Genomic_DNA"/>
</dbReference>
<dbReference type="PIR" id="B71720">
    <property type="entry name" value="B71720"/>
</dbReference>
<dbReference type="RefSeq" id="NP_220500.1">
    <property type="nucleotide sequence ID" value="NC_000963.1"/>
</dbReference>
<dbReference type="RefSeq" id="WP_010886214.1">
    <property type="nucleotide sequence ID" value="NC_000963.1"/>
</dbReference>
<dbReference type="SMR" id="Q9ZE40"/>
<dbReference type="STRING" id="272947.gene:17555191"/>
<dbReference type="EnsemblBacteria" id="CAA14577">
    <property type="protein sequence ID" value="CAA14577"/>
    <property type="gene ID" value="CAA14577"/>
</dbReference>
<dbReference type="KEGG" id="rpr:RP108"/>
<dbReference type="PATRIC" id="fig|272947.5.peg.110"/>
<dbReference type="eggNOG" id="COG1340">
    <property type="taxonomic scope" value="Bacteria"/>
</dbReference>
<dbReference type="eggNOG" id="COG3704">
    <property type="taxonomic scope" value="Bacteria"/>
</dbReference>
<dbReference type="HOGENOM" id="CLU_275941_0_0_5"/>
<dbReference type="OrthoDB" id="7163280at2"/>
<dbReference type="Proteomes" id="UP000002480">
    <property type="component" value="Chromosome"/>
</dbReference>
<dbReference type="GO" id="GO:0005886">
    <property type="term" value="C:plasma membrane"/>
    <property type="evidence" value="ECO:0007669"/>
    <property type="project" value="UniProtKB-SubCell"/>
</dbReference>
<dbReference type="GO" id="GO:0030255">
    <property type="term" value="P:protein secretion by the type IV secretion system"/>
    <property type="evidence" value="ECO:0007669"/>
    <property type="project" value="InterPro"/>
</dbReference>
<dbReference type="InterPro" id="IPR007688">
    <property type="entry name" value="Conjugal_tfr_TrbL/VirB6"/>
</dbReference>
<dbReference type="Pfam" id="PF04610">
    <property type="entry name" value="TrbL"/>
    <property type="match status" value="1"/>
</dbReference>
<dbReference type="PROSITE" id="PS51257">
    <property type="entry name" value="PROKAR_LIPOPROTEIN"/>
    <property type="match status" value="1"/>
</dbReference>
<evidence type="ECO:0000255" key="1"/>
<evidence type="ECO:0000255" key="2">
    <source>
        <dbReference type="PROSITE-ProRule" id="PRU00303"/>
    </source>
</evidence>
<evidence type="ECO:0000305" key="3"/>
<comment type="subcellular location">
    <subcellularLocation>
        <location evidence="2">Cell membrane</location>
        <topology evidence="3">Multi-pass membrane protein</topology>
    </subcellularLocation>
    <subcellularLocation>
        <location evidence="2">Cell membrane</location>
        <topology evidence="2">Lipid-anchor</topology>
    </subcellularLocation>
</comment>
<comment type="similarity">
    <text evidence="3">Belongs to the TrbL/VirB6 family.</text>
</comment>
<name>Y108_RICPR</name>
<feature type="signal peptide" evidence="2">
    <location>
        <begin position="1"/>
        <end position="19"/>
    </location>
</feature>
<feature type="chain" id="PRO_0000269912" description="Uncharacterized lipoprotein RP108">
    <location>
        <begin position="20"/>
        <end position="1155"/>
    </location>
</feature>
<feature type="transmembrane region" description="Helical" evidence="1">
    <location>
        <begin position="289"/>
        <end position="309"/>
    </location>
</feature>
<feature type="transmembrane region" description="Helical" evidence="1">
    <location>
        <begin position="395"/>
        <end position="415"/>
    </location>
</feature>
<feature type="transmembrane region" description="Helical" evidence="1">
    <location>
        <begin position="424"/>
        <end position="444"/>
    </location>
</feature>
<feature type="transmembrane region" description="Helical" evidence="1">
    <location>
        <begin position="459"/>
        <end position="479"/>
    </location>
</feature>
<feature type="lipid moiety-binding region" description="N-palmitoyl cysteine" evidence="2">
    <location>
        <position position="20"/>
    </location>
</feature>
<feature type="lipid moiety-binding region" description="S-diacylglycerol cysteine" evidence="2">
    <location>
        <position position="20"/>
    </location>
</feature>
<keyword id="KW-1003">Cell membrane</keyword>
<keyword id="KW-0449">Lipoprotein</keyword>
<keyword id="KW-0472">Membrane</keyword>
<keyword id="KW-0564">Palmitate</keyword>
<keyword id="KW-1185">Reference proteome</keyword>
<keyword id="KW-0732">Signal</keyword>
<keyword id="KW-0812">Transmembrane</keyword>
<keyword id="KW-1133">Transmembrane helix</keyword>
<sequence length="1155" mass="132311">MKKNIFITSLLILLLLLSSCTGDTCIDPDDFGFITFNVSSRYNPGEITSRHEGDQVTPWRDSAYKVNGYPLTIMVRPWNYILGDKNTSGQLSAWCPWYGQKNNTTTLAPFCVKLQPCTFWDNARFDMCTPNPENRNDAMISNPPCIMTDGVGLYFLIAAKNTDPNISPDSQRRPQGITKHLGELTSSVGYEFYSISSTGQFLKAGGINYQYNGEDKSKYAQSPLYFKIIDKFYDDNSGQYRLVIKSGVSDTRPDPLQFLTDLIKKVLFGKDGMIKKTYQQIIDTPGYKISVSAILTLYIMFTVLSFLIGNINLTHVELIIRIFKISIISILLSTDKAWTFFHDYLFVFFIDGVQQILQIINEAAATGPGSQSLLGLLISTQTLSKLFSLLFVDWLGFIYIILYLIALYFIFFLIFKATIIYLTALITIGMIIIMGPIFICFMLFNITRSLFENWLRQLISYALQPIILFAGIAFISMIIRTEIYSTLGFGVCKHDFPNLGPINEIFGSFLEDIDPSLGNSIFYWWFPVPMKGGINNFHKAKILVPNDHIVVDASCKNDHDKCKHCAAYECIDERYIELPFLDLVKDSTRINNFINGKFVQLDGILLIFVSIYLLSKFNDTAVSTAQFIAGTSGNLTDIQKVNQQSYESLSQQINRPLNYVAQAVSAPVTSRISAGTEQASMFFAEKFENMMMERLEKQALSSSANKAVQNEVKRKYGIDSKDVKMNAIKDYEDGISGLLKNLPKRNELKVKELSQMKFIQLRDKISANKYDVQDYAALSKEQKTELDKLLKDANLRALASEANFTKDYQEAYKQAHQEMSGRGIGLFGKNIGVLRSWQEMEHRVNVKRKLKEEKRIGIGEKIYAGYTGIKRAALTKILGKDLRDAYEGNLTSAEWHDFEYNDPRLRTYSEKLKDDEKAREYEELRMHINKETIAVQADILSPEYLVKLEKAGRQSDVEYYQGLAQKQLIHDVHSRLFEEGEPVMMGDRFMREKATDSQMRDMIDNAHKKYAELIDVDRYTRRQEYYDIIHEKAKENLEQTYKELKDHFKSDNISIEEMPSLIAQKVKDTNTGSEIDKKITEEINNFNTDVKNYEYSTAVLNKIEDRKQAIMNEVNAQIDKINKYRASAKMEQYVKPILNEGRKLRTLEDHLKNMT</sequence>
<proteinExistence type="inferred from homology"/>